<protein>
    <recommendedName>
        <fullName>Histone H3.1</fullName>
    </recommendedName>
</protein>
<dbReference type="EMBL" id="AL590443">
    <property type="protein sequence ID" value="CAD26289.1"/>
    <property type="molecule type" value="Genomic_DNA"/>
</dbReference>
<dbReference type="RefSeq" id="NP_597654.1">
    <property type="nucleotide sequence ID" value="NM_001041018.1"/>
</dbReference>
<dbReference type="SMR" id="Q8SS77"/>
<dbReference type="FunCoup" id="Q8SS77">
    <property type="interactions" value="216"/>
</dbReference>
<dbReference type="STRING" id="284813.Q8SS77"/>
<dbReference type="GeneID" id="858816"/>
<dbReference type="KEGG" id="ecu:ECU03_1460"/>
<dbReference type="VEuPathDB" id="MicrosporidiaDB:ECU03_1460"/>
<dbReference type="HOGENOM" id="CLU_078295_4_1_1"/>
<dbReference type="InParanoid" id="Q8SS77"/>
<dbReference type="OMA" id="ANDCAIH"/>
<dbReference type="OrthoDB" id="842664at2759"/>
<dbReference type="Proteomes" id="UP000000819">
    <property type="component" value="Chromosome III"/>
</dbReference>
<dbReference type="GO" id="GO:0000786">
    <property type="term" value="C:nucleosome"/>
    <property type="evidence" value="ECO:0007669"/>
    <property type="project" value="UniProtKB-KW"/>
</dbReference>
<dbReference type="GO" id="GO:0005634">
    <property type="term" value="C:nucleus"/>
    <property type="evidence" value="ECO:0007669"/>
    <property type="project" value="UniProtKB-SubCell"/>
</dbReference>
<dbReference type="GO" id="GO:0003677">
    <property type="term" value="F:DNA binding"/>
    <property type="evidence" value="ECO:0007669"/>
    <property type="project" value="UniProtKB-KW"/>
</dbReference>
<dbReference type="GO" id="GO:0046982">
    <property type="term" value="F:protein heterodimerization activity"/>
    <property type="evidence" value="ECO:0007669"/>
    <property type="project" value="InterPro"/>
</dbReference>
<dbReference type="GO" id="GO:0030527">
    <property type="term" value="F:structural constituent of chromatin"/>
    <property type="evidence" value="ECO:0007669"/>
    <property type="project" value="InterPro"/>
</dbReference>
<dbReference type="CDD" id="cd22911">
    <property type="entry name" value="HFD_H3"/>
    <property type="match status" value="1"/>
</dbReference>
<dbReference type="FunFam" id="1.10.20.10:FF:000096">
    <property type="entry name" value="Histone H3"/>
    <property type="match status" value="1"/>
</dbReference>
<dbReference type="Gene3D" id="1.10.20.10">
    <property type="entry name" value="Histone, subunit A"/>
    <property type="match status" value="1"/>
</dbReference>
<dbReference type="InterPro" id="IPR009072">
    <property type="entry name" value="Histone-fold"/>
</dbReference>
<dbReference type="InterPro" id="IPR007125">
    <property type="entry name" value="Histone_H2A/H2B/H3"/>
</dbReference>
<dbReference type="InterPro" id="IPR000164">
    <property type="entry name" value="Histone_H3/CENP-A"/>
</dbReference>
<dbReference type="PANTHER" id="PTHR11426">
    <property type="entry name" value="HISTONE H3"/>
    <property type="match status" value="1"/>
</dbReference>
<dbReference type="Pfam" id="PF00125">
    <property type="entry name" value="Histone"/>
    <property type="match status" value="1"/>
</dbReference>
<dbReference type="PRINTS" id="PR00622">
    <property type="entry name" value="HISTONEH3"/>
</dbReference>
<dbReference type="SMART" id="SM00428">
    <property type="entry name" value="H3"/>
    <property type="match status" value="1"/>
</dbReference>
<dbReference type="SUPFAM" id="SSF47113">
    <property type="entry name" value="Histone-fold"/>
    <property type="match status" value="1"/>
</dbReference>
<dbReference type="PROSITE" id="PS00322">
    <property type="entry name" value="HISTONE_H3_1"/>
    <property type="match status" value="1"/>
</dbReference>
<proteinExistence type="inferred from homology"/>
<accession>Q8SS77</accession>
<feature type="initiator methionine" description="Removed" evidence="1">
    <location>
        <position position="1"/>
    </location>
</feature>
<feature type="chain" id="PRO_0000221360" description="Histone H3.1">
    <location>
        <begin position="2"/>
        <end position="144"/>
    </location>
</feature>
<feature type="region of interest" description="Disordered" evidence="2">
    <location>
        <begin position="1"/>
        <end position="45"/>
    </location>
</feature>
<feature type="modified residue" description="N6,N6,N6-trimethyllysine; alternate" evidence="1">
    <location>
        <position position="5"/>
    </location>
</feature>
<feature type="modified residue" description="N6,N6-dimethyllysine; alternate" evidence="1">
    <location>
        <position position="5"/>
    </location>
</feature>
<feature type="modified residue" description="N6-methyllysine; alternate" evidence="1">
    <location>
        <position position="5"/>
    </location>
</feature>
<feature type="modified residue" description="N6-acetyllysine; alternate" evidence="1">
    <location>
        <position position="10"/>
    </location>
</feature>
<feature type="modified residue" description="N6-methyllysine; alternate" evidence="1">
    <location>
        <position position="10"/>
    </location>
</feature>
<feature type="modified residue" description="N6,N6-dimethyllysine; alternate" evidence="1">
    <location>
        <position position="15"/>
    </location>
</feature>
<feature type="modified residue" description="N6-acetyllysine; alternate" evidence="1">
    <location>
        <position position="15"/>
    </location>
</feature>
<feature type="modified residue" description="N6-acetyllysine; alternate" evidence="1">
    <location>
        <position position="19"/>
    </location>
</feature>
<feature type="modified residue" description="N6-methyllysine; alternate" evidence="1">
    <location>
        <position position="19"/>
    </location>
</feature>
<feature type="modified residue" description="N6-acetyllysine; alternate" evidence="1">
    <location>
        <position position="24"/>
    </location>
</feature>
<feature type="modified residue" description="N6-methyllysine; alternate" evidence="1">
    <location>
        <position position="24"/>
    </location>
</feature>
<feature type="modified residue" description="N6,N6,N6-trimethyllysine; alternate" evidence="1">
    <location>
        <position position="28"/>
    </location>
</feature>
<feature type="modified residue" description="N6,N6-dimethyllysine; alternate" evidence="1">
    <location>
        <position position="28"/>
    </location>
</feature>
<feature type="modified residue" description="N6-acetyllysine; alternate" evidence="1">
    <location>
        <position position="28"/>
    </location>
</feature>
<feature type="modified residue" description="N6-methyllysine; alternate" evidence="1">
    <location>
        <position position="28"/>
    </location>
</feature>
<feature type="modified residue" description="N6,N6,N6-trimethyllysine; alternate" evidence="1">
    <location>
        <position position="39"/>
    </location>
</feature>
<feature type="modified residue" description="N6,N6-dimethyllysine; alternate" evidence="1">
    <location>
        <position position="39"/>
    </location>
</feature>
<feature type="modified residue" description="N6-acetyllysine; alternate" evidence="1">
    <location>
        <position position="39"/>
    </location>
</feature>
<feature type="modified residue" description="N6-methyllysine; alternate" evidence="1">
    <location>
        <position position="39"/>
    </location>
</feature>
<feature type="modified residue" description="N6-acetyllysine" evidence="1">
    <location>
        <position position="58"/>
    </location>
</feature>
<keyword id="KW-0007">Acetylation</keyword>
<keyword id="KW-0158">Chromosome</keyword>
<keyword id="KW-0238">DNA-binding</keyword>
<keyword id="KW-0488">Methylation</keyword>
<keyword id="KW-0544">Nucleosome core</keyword>
<keyword id="KW-0539">Nucleus</keyword>
<keyword id="KW-1185">Reference proteome</keyword>
<reference key="1">
    <citation type="journal article" date="2001" name="Nature">
        <title>Genome sequence and gene compaction of the eukaryote parasite Encephalitozoon cuniculi.</title>
        <authorList>
            <person name="Katinka M.D."/>
            <person name="Duprat S."/>
            <person name="Cornillot E."/>
            <person name="Metenier G."/>
            <person name="Thomarat F."/>
            <person name="Prensier G."/>
            <person name="Barbe V."/>
            <person name="Peyretaillade E."/>
            <person name="Brottier P."/>
            <person name="Wincker P."/>
            <person name="Delbac F."/>
            <person name="El Alaoui H."/>
            <person name="Peyret P."/>
            <person name="Saurin W."/>
            <person name="Gouy M."/>
            <person name="Weissenbach J."/>
            <person name="Vivares C.P."/>
        </authorList>
    </citation>
    <scope>NUCLEOTIDE SEQUENCE [LARGE SCALE GENOMIC DNA]</scope>
    <source>
        <strain>GB-M1</strain>
    </source>
</reference>
<organism>
    <name type="scientific">Encephalitozoon cuniculi (strain GB-M1)</name>
    <name type="common">Microsporidian parasite</name>
    <dbReference type="NCBI Taxonomy" id="284813"/>
    <lineage>
        <taxon>Eukaryota</taxon>
        <taxon>Fungi</taxon>
        <taxon>Fungi incertae sedis</taxon>
        <taxon>Microsporidia</taxon>
        <taxon>Unikaryonidae</taxon>
        <taxon>Encephalitozoon</taxon>
    </lineage>
</organism>
<gene>
    <name type="primary">HHT1</name>
    <name type="ordered locus">ECU03_1460</name>
</gene>
<comment type="function">
    <text>Core component of nucleosome. Nucleosomes wrap and compact DNA into chromatin, limiting DNA accessibility to the cellular machineries which require DNA as a template. Histones thereby play a central role in transcription regulation, DNA repair, DNA replication and chromosomal stability. DNA accessibility is regulated via a complex set of post-translational modifications of histones, also called histone code, and nucleosome remodeling.</text>
</comment>
<comment type="subunit">
    <text>The nucleosome is a histone octamer containing two molecules each of H2A, H2B, H3 and H4 assembled in one H3-H4 heterotetramer and two H2A-H2B heterodimers. The octamer wraps approximately 147 bp of DNA.</text>
</comment>
<comment type="subcellular location">
    <subcellularLocation>
        <location evidence="1">Nucleus</location>
    </subcellularLocation>
    <subcellularLocation>
        <location evidence="1">Chromosome</location>
    </subcellularLocation>
</comment>
<comment type="PTM">
    <text evidence="1">Mono-, di- and trimethylated to form H3K4me1/2/3. H3K4me activates gene expression by regulating transcription elongation and plays a role in telomere length maintenance. H3K4me enrichment correlates with transcription levels, and occurs in a 5' to 3' gradient with H3K4me3 enrichment at the 5'-end of genes, shifting to H3K4me2 and then H3K4me1. H3K36me represses gene expression (By similarity).</text>
</comment>
<comment type="PTM">
    <text evidence="1">Acetylation of histone H3 leads to transcriptional activation.</text>
</comment>
<comment type="similarity">
    <text evidence="3">Belongs to the histone H3 family.</text>
</comment>
<comment type="caution">
    <text evidence="3">To ensure consistency between histone entries, we follow the 'Brno' nomenclature for histone modifications, with positions referring to those used in the literature for the 'closest' model organism. Due to slight variations in histone sequences between organisms and to the presence of initiator methionine in UniProtKB/Swiss-Prot sequences, the actual positions of modified amino acids in the sequence generally differ. In this entry the following conventions are used: H3K4me1/2/3 = mono-, di- and trimethylated Lys-5; H3K9ac = acetylated Lys-10; H3K9me1 = monomethylated Lys-10; H3K14ac = acetylated Lys-15; H3K14me2 = dimethylated Lys-15; H3K18ac = acetylated Lys-19; H3K18me1 = monomethylated Lys-19; H3K23ac = acetylated Lys-24; H3K23me1 = monomethylated Lys-24; H3K27ac = acetylated Lys-28; H3K27me1/2/3 = mono-, di- and trimethylated Lys-28; H3K36ac = acetylated Lys-39; H3K36me1/2/3 = mono-, di- and trimethylated Lys-39; H3K56ac = acetylated Lys-58.</text>
</comment>
<sequence length="144" mass="15997">MARTKQSARKTTGGKAPRKQLSAKSARKGVSPASSAGAKKSRYRPGSVALKEIRRYQKSTDFLIRRLPFQRACRSVVKECSNATDIRFQGPALASIQEALEVYLVGLFEDAMLCAYHAKRVTVFPKDISLVLKLRSRHVKSISD</sequence>
<name>H31_ENCCU</name>
<evidence type="ECO:0000250" key="1"/>
<evidence type="ECO:0000256" key="2">
    <source>
        <dbReference type="SAM" id="MobiDB-lite"/>
    </source>
</evidence>
<evidence type="ECO:0000305" key="3"/>